<evidence type="ECO:0000255" key="1"/>
<evidence type="ECO:0000256" key="2">
    <source>
        <dbReference type="SAM" id="MobiDB-lite"/>
    </source>
</evidence>
<evidence type="ECO:0000305" key="3"/>
<accession>P9WI49</accession>
<accession>L0T5N5</accession>
<accession>Q10892</accession>
<sequence>MAIPPEVHSGLLSAGCGPGSLLVAAQQWQELSDQYALACAELGQLLGEVQASSWQGTAATQYVAAHGPYLAWLEQTAINSAVTAAQHVAAAAAYCSALAAMPTPAELAANHAIHGVLIATNFFGINTVPIALNEADYVRMWLQAADTMAAYQAVADAATVAVPSTQPAPPIRAPGGDAADTRLDVLSSIGQLIRDILDFIANPYKYFLEFFEQFGFSPAVTVVLALVALQLYDFLWYPYYASYGLLLLPFFTPTLSALTALSALIHLLNLPPAGLLPIAAALGPGDQWGANLAVAVTPATAAVPGGSPPTSNPAPAAPSSNSVGSASAAPGISYAVPGLAPPGVSSGPKAGTKSPDTAADTLATAGAARPGLARAHRRKRSESGVGIRGYRDEFLDATATVDAATDVPAPANAAGSQGAGTLGFAGTAPTTSGAAAGMVQLSSHSTSTTVPLLPTTWTTDAEQ</sequence>
<reference key="1">
    <citation type="journal article" date="1998" name="Nature">
        <title>Deciphering the biology of Mycobacterium tuberculosis from the complete genome sequence.</title>
        <authorList>
            <person name="Cole S.T."/>
            <person name="Brosch R."/>
            <person name="Parkhill J."/>
            <person name="Garnier T."/>
            <person name="Churcher C.M."/>
            <person name="Harris D.E."/>
            <person name="Gordon S.V."/>
            <person name="Eiglmeier K."/>
            <person name="Gas S."/>
            <person name="Barry C.E. III"/>
            <person name="Tekaia F."/>
            <person name="Badcock K."/>
            <person name="Basham D."/>
            <person name="Brown D."/>
            <person name="Chillingworth T."/>
            <person name="Connor R."/>
            <person name="Davies R.M."/>
            <person name="Devlin K."/>
            <person name="Feltwell T."/>
            <person name="Gentles S."/>
            <person name="Hamlin N."/>
            <person name="Holroyd S."/>
            <person name="Hornsby T."/>
            <person name="Jagels K."/>
            <person name="Krogh A."/>
            <person name="McLean J."/>
            <person name="Moule S."/>
            <person name="Murphy L.D."/>
            <person name="Oliver S."/>
            <person name="Osborne J."/>
            <person name="Quail M.A."/>
            <person name="Rajandream M.A."/>
            <person name="Rogers J."/>
            <person name="Rutter S."/>
            <person name="Seeger K."/>
            <person name="Skelton S."/>
            <person name="Squares S."/>
            <person name="Squares R."/>
            <person name="Sulston J.E."/>
            <person name="Taylor K."/>
            <person name="Whitehead S."/>
            <person name="Barrell B.G."/>
        </authorList>
    </citation>
    <scope>NUCLEOTIDE SEQUENCE [LARGE SCALE GENOMIC DNA]</scope>
    <source>
        <strain>ATCC 25618 / H37Rv</strain>
    </source>
</reference>
<feature type="chain" id="PRO_0000217842" description="Uncharacterized PPE family protein PPE1">
    <location>
        <begin position="1"/>
        <end position="463"/>
    </location>
</feature>
<feature type="transmembrane region" description="Helical" evidence="1">
    <location>
        <begin position="3"/>
        <end position="23"/>
    </location>
</feature>
<feature type="transmembrane region" description="Helical" evidence="1">
    <location>
        <begin position="88"/>
        <end position="108"/>
    </location>
</feature>
<feature type="transmembrane region" description="Helical" evidence="1">
    <location>
        <begin position="112"/>
        <end position="132"/>
    </location>
</feature>
<feature type="transmembrane region" description="Helical" evidence="1">
    <location>
        <begin position="216"/>
        <end position="236"/>
    </location>
</feature>
<feature type="transmembrane region" description="Helical" evidence="1">
    <location>
        <begin position="245"/>
        <end position="265"/>
    </location>
</feature>
<feature type="transmembrane region" description="Helical" evidence="1">
    <location>
        <begin position="276"/>
        <end position="296"/>
    </location>
</feature>
<feature type="transmembrane region" description="Helical" evidence="1">
    <location>
        <begin position="323"/>
        <end position="343"/>
    </location>
</feature>
<feature type="transmembrane region" description="Helical" evidence="1">
    <location>
        <begin position="419"/>
        <end position="439"/>
    </location>
</feature>
<feature type="region of interest" description="Disordered" evidence="2">
    <location>
        <begin position="303"/>
        <end position="322"/>
    </location>
</feature>
<feature type="compositionally biased region" description="Pro residues" evidence="2">
    <location>
        <begin position="306"/>
        <end position="316"/>
    </location>
</feature>
<keyword id="KW-1003">Cell membrane</keyword>
<keyword id="KW-0472">Membrane</keyword>
<keyword id="KW-1185">Reference proteome</keyword>
<keyword id="KW-0812">Transmembrane</keyword>
<keyword id="KW-1133">Transmembrane helix</keyword>
<organism>
    <name type="scientific">Mycobacterium tuberculosis (strain ATCC 25618 / H37Rv)</name>
    <dbReference type="NCBI Taxonomy" id="83332"/>
    <lineage>
        <taxon>Bacteria</taxon>
        <taxon>Bacillati</taxon>
        <taxon>Actinomycetota</taxon>
        <taxon>Actinomycetes</taxon>
        <taxon>Mycobacteriales</taxon>
        <taxon>Mycobacteriaceae</taxon>
        <taxon>Mycobacterium</taxon>
        <taxon>Mycobacterium tuberculosis complex</taxon>
    </lineage>
</organism>
<name>PPE01_MYCTU</name>
<proteinExistence type="inferred from homology"/>
<dbReference type="EMBL" id="AL123456">
    <property type="protein sequence ID" value="CCP42821.1"/>
    <property type="molecule type" value="Genomic_DNA"/>
</dbReference>
<dbReference type="PIR" id="H70750">
    <property type="entry name" value="H70750"/>
</dbReference>
<dbReference type="RefSeq" id="WP_003400781.1">
    <property type="nucleotide sequence ID" value="NZ_NVQJ01000053.1"/>
</dbReference>
<dbReference type="RefSeq" id="YP_177690.1">
    <property type="nucleotide sequence ID" value="NC_000962.3"/>
</dbReference>
<dbReference type="SMR" id="P9WI49"/>
<dbReference type="STRING" id="83332.Rv0096"/>
<dbReference type="PaxDb" id="83332-Rv0096"/>
<dbReference type="DNASU" id="886938"/>
<dbReference type="GeneID" id="886938"/>
<dbReference type="KEGG" id="mtu:Rv0096"/>
<dbReference type="KEGG" id="mtv:RVBD_0096"/>
<dbReference type="TubercuList" id="Rv0096"/>
<dbReference type="eggNOG" id="COG5651">
    <property type="taxonomic scope" value="Bacteria"/>
</dbReference>
<dbReference type="InParanoid" id="P9WI49"/>
<dbReference type="OrthoDB" id="4753487at2"/>
<dbReference type="Proteomes" id="UP000001584">
    <property type="component" value="Chromosome"/>
</dbReference>
<dbReference type="GO" id="GO:0005886">
    <property type="term" value="C:plasma membrane"/>
    <property type="evidence" value="ECO:0007669"/>
    <property type="project" value="UniProtKB-SubCell"/>
</dbReference>
<dbReference type="GO" id="GO:0052572">
    <property type="term" value="P:response to host immune response"/>
    <property type="evidence" value="ECO:0000318"/>
    <property type="project" value="GO_Central"/>
</dbReference>
<dbReference type="Gene3D" id="1.20.1260.20">
    <property type="entry name" value="PPE superfamily"/>
    <property type="match status" value="1"/>
</dbReference>
<dbReference type="InterPro" id="IPR043641">
    <property type="entry name" value="PPE-PPW_C"/>
</dbReference>
<dbReference type="InterPro" id="IPR000030">
    <property type="entry name" value="PPE_dom"/>
</dbReference>
<dbReference type="InterPro" id="IPR038332">
    <property type="entry name" value="PPE_sf"/>
</dbReference>
<dbReference type="PANTHER" id="PTHR46766">
    <property type="entry name" value="GLUTAMINE-RICH PROTEIN 2"/>
    <property type="match status" value="1"/>
</dbReference>
<dbReference type="PANTHER" id="PTHR46766:SF1">
    <property type="entry name" value="GLUTAMINE-RICH PROTEIN 2"/>
    <property type="match status" value="1"/>
</dbReference>
<dbReference type="Pfam" id="PF00823">
    <property type="entry name" value="PPE"/>
    <property type="match status" value="1"/>
</dbReference>
<dbReference type="Pfam" id="PF18878">
    <property type="entry name" value="PPE-PPW"/>
    <property type="match status" value="1"/>
</dbReference>
<dbReference type="SUPFAM" id="SSF140459">
    <property type="entry name" value="PE/PPE dimer-like"/>
    <property type="match status" value="1"/>
</dbReference>
<protein>
    <recommendedName>
        <fullName>Uncharacterized PPE family protein PPE1</fullName>
    </recommendedName>
</protein>
<comment type="subcellular location">
    <subcellularLocation>
        <location evidence="3">Cell membrane</location>
        <topology evidence="3">Multi-pass membrane protein</topology>
    </subcellularLocation>
</comment>
<comment type="similarity">
    <text evidence="3">Belongs to the mycobacterial PPE family.</text>
</comment>
<gene>
    <name type="primary">PPE1</name>
    <name type="ordered locus">Rv0096</name>
    <name type="ORF">MTCY251.15</name>
</gene>